<name>AATM_XENTR</name>
<sequence length="427" mass="47575">MALLKSRLLVGVARCQPCLAAVQGRASSWWSHVEMGPPDPILGVTEAFKRDTNSKKMNLGVGAYRDDNGKPYVLSSVRKAEAQLASKNLDKEYLPIGGLAEFARASAQLALGENCDAIQSGRFITVQTISGTGSLRVGANFLQRFYKYSRDVYLPKPSWGNHTPIFRDAGLEVKGYRYYDPKTCGFDFTGALDDISKIPEQSIILFHACAHNPTGVDPKQEQWKELAALIKSRRLFPFFDMAYQGFASGDTNRDAWAVRHFIQEGINVVLSQSYAKNMGLYGERVGAFTVVCSDAEEAKRVESQLKILIRPMYSNPPLNGARIAAAILTQPDLRKEWLQEVKGMANRIISMREQLVSNLKKEGSIHNWQHISDQIGMFCFTGLRPEQVERLIKEFSIYMTKDGRISVAGVTSANNGYLAHAIHQVTK</sequence>
<comment type="function">
    <text evidence="2">Catalyzes the irreversible transamination of the L-tryptophan metabolite L-kynurenine to form kynurenic acid (KA). As a member of the malate-aspartate shuttle, it has a key role in the intracellular NAD(H) redox balance. Is important for metabolite exchange between mitochondria and cytosol, and for amino acid metabolism.</text>
</comment>
<comment type="catalytic activity">
    <reaction evidence="3">
        <text>L-aspartate + 2-oxoglutarate = oxaloacetate + L-glutamate</text>
        <dbReference type="Rhea" id="RHEA:21824"/>
        <dbReference type="ChEBI" id="CHEBI:16452"/>
        <dbReference type="ChEBI" id="CHEBI:16810"/>
        <dbReference type="ChEBI" id="CHEBI:29985"/>
        <dbReference type="ChEBI" id="CHEBI:29991"/>
        <dbReference type="EC" id="2.6.1.1"/>
    </reaction>
</comment>
<comment type="catalytic activity">
    <reaction evidence="3">
        <text>L-kynurenine + 2-oxoglutarate = kynurenate + L-glutamate + H2O</text>
        <dbReference type="Rhea" id="RHEA:65560"/>
        <dbReference type="ChEBI" id="CHEBI:15377"/>
        <dbReference type="ChEBI" id="CHEBI:16810"/>
        <dbReference type="ChEBI" id="CHEBI:29985"/>
        <dbReference type="ChEBI" id="CHEBI:57959"/>
        <dbReference type="ChEBI" id="CHEBI:58454"/>
        <dbReference type="EC" id="2.6.1.7"/>
    </reaction>
</comment>
<comment type="cofactor">
    <cofactor evidence="1">
        <name>pyridoxal 5'-phosphate</name>
        <dbReference type="ChEBI" id="CHEBI:597326"/>
    </cofactor>
</comment>
<comment type="subunit">
    <text evidence="1">Homodimer.</text>
</comment>
<comment type="subcellular location">
    <subcellularLocation>
        <location evidence="1">Mitochondrion matrix</location>
    </subcellularLocation>
</comment>
<comment type="miscellaneous">
    <text>In eukaryotes there are cytoplasmic, mitochondrial and chloroplastic isozymes.</text>
</comment>
<comment type="similarity">
    <text evidence="4">Belongs to the class-I pyridoxal-phosphate-dependent aminotransferase family.</text>
</comment>
<accession>Q28F67</accession>
<organism>
    <name type="scientific">Xenopus tropicalis</name>
    <name type="common">Western clawed frog</name>
    <name type="synonym">Silurana tropicalis</name>
    <dbReference type="NCBI Taxonomy" id="8364"/>
    <lineage>
        <taxon>Eukaryota</taxon>
        <taxon>Metazoa</taxon>
        <taxon>Chordata</taxon>
        <taxon>Craniata</taxon>
        <taxon>Vertebrata</taxon>
        <taxon>Euteleostomi</taxon>
        <taxon>Amphibia</taxon>
        <taxon>Batrachia</taxon>
        <taxon>Anura</taxon>
        <taxon>Pipoidea</taxon>
        <taxon>Pipidae</taxon>
        <taxon>Xenopodinae</taxon>
        <taxon>Xenopus</taxon>
        <taxon>Silurana</taxon>
    </lineage>
</organism>
<evidence type="ECO:0000250" key="1"/>
<evidence type="ECO:0000250" key="2">
    <source>
        <dbReference type="UniProtKB" id="P00505"/>
    </source>
</evidence>
<evidence type="ECO:0000250" key="3">
    <source>
        <dbReference type="UniProtKB" id="P00507"/>
    </source>
</evidence>
<evidence type="ECO:0000305" key="4"/>
<dbReference type="EC" id="2.6.1.1" evidence="3"/>
<dbReference type="EC" id="2.6.1.7" evidence="3"/>
<dbReference type="EMBL" id="CR762138">
    <property type="protein sequence ID" value="CAJ83961.1"/>
    <property type="molecule type" value="mRNA"/>
</dbReference>
<dbReference type="RefSeq" id="NP_001016933.1">
    <property type="nucleotide sequence ID" value="NM_001016933.2"/>
</dbReference>
<dbReference type="SMR" id="Q28F67"/>
<dbReference type="FunCoup" id="Q28F67">
    <property type="interactions" value="1821"/>
</dbReference>
<dbReference type="STRING" id="8364.ENSXETP00000002957"/>
<dbReference type="PaxDb" id="8364-ENSXETP00000034675"/>
<dbReference type="GeneID" id="549687"/>
<dbReference type="KEGG" id="xtr:549687"/>
<dbReference type="AGR" id="Xenbase:XB-GENE-998300"/>
<dbReference type="CTD" id="2806"/>
<dbReference type="eggNOG" id="KOG1411">
    <property type="taxonomic scope" value="Eukaryota"/>
</dbReference>
<dbReference type="HOGENOM" id="CLU_032440_1_0_1"/>
<dbReference type="InParanoid" id="Q28F67"/>
<dbReference type="OMA" id="VGACTIV"/>
<dbReference type="OrthoDB" id="6752799at2759"/>
<dbReference type="Reactome" id="R-XTR-389661">
    <property type="pathway name" value="Glyoxylate metabolism and glycine degradation"/>
</dbReference>
<dbReference type="Reactome" id="R-XTR-8963693">
    <property type="pathway name" value="Aspartate and asparagine metabolism"/>
</dbReference>
<dbReference type="Reactome" id="R-XTR-8964539">
    <property type="pathway name" value="Glutamate and glutamine metabolism"/>
</dbReference>
<dbReference type="Reactome" id="R-XTR-9856872">
    <property type="pathway name" value="Malate-aspartate shuttle"/>
</dbReference>
<dbReference type="Proteomes" id="UP000008143">
    <property type="component" value="Chromosome 4"/>
</dbReference>
<dbReference type="Bgee" id="ENSXETG00000015896">
    <property type="expression patterns" value="Expressed in skeletal muscle tissue and 21 other cell types or tissues"/>
</dbReference>
<dbReference type="ExpressionAtlas" id="Q28F67">
    <property type="expression patterns" value="baseline"/>
</dbReference>
<dbReference type="GO" id="GO:0005759">
    <property type="term" value="C:mitochondrial matrix"/>
    <property type="evidence" value="ECO:0007669"/>
    <property type="project" value="UniProtKB-SubCell"/>
</dbReference>
<dbReference type="GO" id="GO:0005739">
    <property type="term" value="C:mitochondrion"/>
    <property type="evidence" value="ECO:0000250"/>
    <property type="project" value="UniProtKB"/>
</dbReference>
<dbReference type="GO" id="GO:0016212">
    <property type="term" value="F:kynurenine-oxoglutarate transaminase activity"/>
    <property type="evidence" value="ECO:0007669"/>
    <property type="project" value="UniProtKB-EC"/>
</dbReference>
<dbReference type="GO" id="GO:0004069">
    <property type="term" value="F:L-aspartate:2-oxoglutarate aminotransferase activity"/>
    <property type="evidence" value="ECO:0000250"/>
    <property type="project" value="UniProtKB"/>
</dbReference>
<dbReference type="GO" id="GO:0030170">
    <property type="term" value="F:pyridoxal phosphate binding"/>
    <property type="evidence" value="ECO:0007669"/>
    <property type="project" value="InterPro"/>
</dbReference>
<dbReference type="GO" id="GO:0006103">
    <property type="term" value="P:2-oxoglutarate metabolic process"/>
    <property type="evidence" value="ECO:0000250"/>
    <property type="project" value="UniProtKB"/>
</dbReference>
<dbReference type="GO" id="GO:0006531">
    <property type="term" value="P:aspartate metabolic process"/>
    <property type="evidence" value="ECO:0000250"/>
    <property type="project" value="UniProtKB"/>
</dbReference>
<dbReference type="GO" id="GO:0009058">
    <property type="term" value="P:biosynthetic process"/>
    <property type="evidence" value="ECO:0007669"/>
    <property type="project" value="InterPro"/>
</dbReference>
<dbReference type="GO" id="GO:0006536">
    <property type="term" value="P:glutamate metabolic process"/>
    <property type="evidence" value="ECO:0000250"/>
    <property type="project" value="UniProtKB"/>
</dbReference>
<dbReference type="CDD" id="cd00609">
    <property type="entry name" value="AAT_like"/>
    <property type="match status" value="1"/>
</dbReference>
<dbReference type="FunFam" id="3.40.640.10:FF:000026">
    <property type="entry name" value="Aspartate aminotransferase"/>
    <property type="match status" value="1"/>
</dbReference>
<dbReference type="FunFam" id="3.90.1150.10:FF:000001">
    <property type="entry name" value="Aspartate aminotransferase"/>
    <property type="match status" value="1"/>
</dbReference>
<dbReference type="FunFam" id="3.90.1150.10:FF:000160">
    <property type="entry name" value="Similar to aspartate aminotransferase"/>
    <property type="match status" value="1"/>
</dbReference>
<dbReference type="Gene3D" id="3.90.1150.10">
    <property type="entry name" value="Aspartate Aminotransferase, domain 1"/>
    <property type="match status" value="1"/>
</dbReference>
<dbReference type="Gene3D" id="3.40.640.10">
    <property type="entry name" value="Type I PLP-dependent aspartate aminotransferase-like (Major domain)"/>
    <property type="match status" value="1"/>
</dbReference>
<dbReference type="InterPro" id="IPR004839">
    <property type="entry name" value="Aminotransferase_I/II_large"/>
</dbReference>
<dbReference type="InterPro" id="IPR000796">
    <property type="entry name" value="Asp_trans"/>
</dbReference>
<dbReference type="InterPro" id="IPR004838">
    <property type="entry name" value="NHTrfase_class1_PyrdxlP-BS"/>
</dbReference>
<dbReference type="InterPro" id="IPR015424">
    <property type="entry name" value="PyrdxlP-dep_Trfase"/>
</dbReference>
<dbReference type="InterPro" id="IPR015421">
    <property type="entry name" value="PyrdxlP-dep_Trfase_major"/>
</dbReference>
<dbReference type="InterPro" id="IPR015422">
    <property type="entry name" value="PyrdxlP-dep_Trfase_small"/>
</dbReference>
<dbReference type="NCBIfam" id="NF006719">
    <property type="entry name" value="PRK09257.1"/>
    <property type="match status" value="1"/>
</dbReference>
<dbReference type="PANTHER" id="PTHR11879">
    <property type="entry name" value="ASPARTATE AMINOTRANSFERASE"/>
    <property type="match status" value="1"/>
</dbReference>
<dbReference type="PANTHER" id="PTHR11879:SF22">
    <property type="entry name" value="ASPARTATE AMINOTRANSFERASE, MITOCHONDRIAL"/>
    <property type="match status" value="1"/>
</dbReference>
<dbReference type="Pfam" id="PF00155">
    <property type="entry name" value="Aminotran_1_2"/>
    <property type="match status" value="1"/>
</dbReference>
<dbReference type="PRINTS" id="PR00799">
    <property type="entry name" value="TRANSAMINASE"/>
</dbReference>
<dbReference type="SUPFAM" id="SSF53383">
    <property type="entry name" value="PLP-dependent transferases"/>
    <property type="match status" value="1"/>
</dbReference>
<dbReference type="PROSITE" id="PS00105">
    <property type="entry name" value="AA_TRANSFER_CLASS_1"/>
    <property type="match status" value="1"/>
</dbReference>
<proteinExistence type="evidence at transcript level"/>
<feature type="transit peptide" description="Mitochondrion" evidence="1">
    <location>
        <begin position="1"/>
        <end position="26"/>
    </location>
</feature>
<feature type="chain" id="PRO_0000327598" description="Aspartate aminotransferase, mitochondrial">
    <location>
        <begin position="27"/>
        <end position="427"/>
    </location>
</feature>
<feature type="binding site" evidence="1">
    <location>
        <position position="62"/>
    </location>
    <ligand>
        <name>substrate</name>
    </ligand>
</feature>
<feature type="binding site" evidence="1">
    <location>
        <position position="159"/>
    </location>
    <ligand>
        <name>substrate</name>
    </ligand>
</feature>
<feature type="binding site" evidence="1">
    <location>
        <position position="212"/>
    </location>
    <ligand>
        <name>substrate</name>
    </ligand>
</feature>
<feature type="binding site" evidence="1">
    <location>
        <position position="404"/>
    </location>
    <ligand>
        <name>substrate</name>
    </ligand>
</feature>
<feature type="modified residue" description="N6-(pyridoxal phosphate)lysine" evidence="1">
    <location>
        <position position="276"/>
    </location>
</feature>
<keyword id="KW-0032">Aminotransferase</keyword>
<keyword id="KW-0496">Mitochondrion</keyword>
<keyword id="KW-0663">Pyridoxal phosphate</keyword>
<keyword id="KW-1185">Reference proteome</keyword>
<keyword id="KW-0808">Transferase</keyword>
<keyword id="KW-0809">Transit peptide</keyword>
<protein>
    <recommendedName>
        <fullName>Aspartate aminotransferase, mitochondrial</fullName>
        <shortName>mAspAT</shortName>
        <ecNumber evidence="3">2.6.1.1</ecNumber>
        <ecNumber evidence="3">2.6.1.7</ecNumber>
    </recommendedName>
    <alternativeName>
        <fullName>Glutamate oxaloacetate transaminase 2</fullName>
    </alternativeName>
    <alternativeName>
        <fullName>Kynurenine aminotransferase 4</fullName>
    </alternativeName>
    <alternativeName>
        <fullName>Kynurenine aminotransferase IV</fullName>
    </alternativeName>
    <alternativeName>
        <fullName>Kynurenine--oxoglutarate transaminase 4</fullName>
    </alternativeName>
    <alternativeName>
        <fullName>Kynurenine--oxoglutarate transaminase IV</fullName>
    </alternativeName>
    <alternativeName>
        <fullName>Transaminase A</fullName>
    </alternativeName>
</protein>
<gene>
    <name type="primary">got2</name>
    <name type="ORF">TGas123d19.1</name>
</gene>
<reference key="1">
    <citation type="submission" date="2006-10" db="EMBL/GenBank/DDBJ databases">
        <authorList>
            <consortium name="Sanger Xenopus tropicalis EST/cDNA project"/>
        </authorList>
    </citation>
    <scope>NUCLEOTIDE SEQUENCE [LARGE SCALE MRNA]</scope>
    <source>
        <tissue>Gastrula</tissue>
    </source>
</reference>